<accession>Q8VZ13</accession>
<accession>Q9LMZ3</accession>
<accession>Q9SGE4</accession>
<comment type="subcellular location">
    <subcellularLocation>
        <location evidence="3">Membrane</location>
        <topology evidence="3">Single-pass membrane protein</topology>
    </subcellularLocation>
</comment>
<comment type="sequence caution" evidence="3">
    <conflict type="erroneous gene model prediction">
        <sequence resource="EMBL-CDS" id="AAF18257"/>
    </conflict>
    <text>The predicted gene has been split into 4 genes: At1g08135, At1g08140, At1g08150 and At1g08160.</text>
</comment>
<comment type="sequence caution" evidence="3">
    <conflict type="erroneous gene model prediction">
        <sequence resource="EMBL-CDS" id="AAF79832"/>
    </conflict>
    <text>The predicted gene has been split into 4 genes: At1g08135, At1g08140, At1g08150 and At1g08160.</text>
</comment>
<organism>
    <name type="scientific">Arabidopsis thaliana</name>
    <name type="common">Mouse-ear cress</name>
    <dbReference type="NCBI Taxonomy" id="3702"/>
    <lineage>
        <taxon>Eukaryota</taxon>
        <taxon>Viridiplantae</taxon>
        <taxon>Streptophyta</taxon>
        <taxon>Embryophyta</taxon>
        <taxon>Tracheophyta</taxon>
        <taxon>Spermatophyta</taxon>
        <taxon>Magnoliopsida</taxon>
        <taxon>eudicotyledons</taxon>
        <taxon>Gunneridae</taxon>
        <taxon>Pentapetalae</taxon>
        <taxon>rosids</taxon>
        <taxon>malvids</taxon>
        <taxon>Brassicales</taxon>
        <taxon>Brassicaceae</taxon>
        <taxon>Camelineae</taxon>
        <taxon>Arabidopsis</taxon>
    </lineage>
</organism>
<gene>
    <name type="ordered locus">At1g08160</name>
    <name type="ORF">T23G18.2</name>
    <name type="ORF">T6D22.24</name>
</gene>
<reference key="1">
    <citation type="journal article" date="2000" name="Nature">
        <title>Sequence and analysis of chromosome 1 of the plant Arabidopsis thaliana.</title>
        <authorList>
            <person name="Theologis A."/>
            <person name="Ecker J.R."/>
            <person name="Palm C.J."/>
            <person name="Federspiel N.A."/>
            <person name="Kaul S."/>
            <person name="White O."/>
            <person name="Alonso J."/>
            <person name="Altafi H."/>
            <person name="Araujo R."/>
            <person name="Bowman C.L."/>
            <person name="Brooks S.Y."/>
            <person name="Buehler E."/>
            <person name="Chan A."/>
            <person name="Chao Q."/>
            <person name="Chen H."/>
            <person name="Cheuk R.F."/>
            <person name="Chin C.W."/>
            <person name="Chung M.K."/>
            <person name="Conn L."/>
            <person name="Conway A.B."/>
            <person name="Conway A.R."/>
            <person name="Creasy T.H."/>
            <person name="Dewar K."/>
            <person name="Dunn P."/>
            <person name="Etgu P."/>
            <person name="Feldblyum T.V."/>
            <person name="Feng J.-D."/>
            <person name="Fong B."/>
            <person name="Fujii C.Y."/>
            <person name="Gill J.E."/>
            <person name="Goldsmith A.D."/>
            <person name="Haas B."/>
            <person name="Hansen N.F."/>
            <person name="Hughes B."/>
            <person name="Huizar L."/>
            <person name="Hunter J.L."/>
            <person name="Jenkins J."/>
            <person name="Johnson-Hopson C."/>
            <person name="Khan S."/>
            <person name="Khaykin E."/>
            <person name="Kim C.J."/>
            <person name="Koo H.L."/>
            <person name="Kremenetskaia I."/>
            <person name="Kurtz D.B."/>
            <person name="Kwan A."/>
            <person name="Lam B."/>
            <person name="Langin-Hooper S."/>
            <person name="Lee A."/>
            <person name="Lee J.M."/>
            <person name="Lenz C.A."/>
            <person name="Li J.H."/>
            <person name="Li Y.-P."/>
            <person name="Lin X."/>
            <person name="Liu S.X."/>
            <person name="Liu Z.A."/>
            <person name="Luros J.S."/>
            <person name="Maiti R."/>
            <person name="Marziali A."/>
            <person name="Militscher J."/>
            <person name="Miranda M."/>
            <person name="Nguyen M."/>
            <person name="Nierman W.C."/>
            <person name="Osborne B.I."/>
            <person name="Pai G."/>
            <person name="Peterson J."/>
            <person name="Pham P.K."/>
            <person name="Rizzo M."/>
            <person name="Rooney T."/>
            <person name="Rowley D."/>
            <person name="Sakano H."/>
            <person name="Salzberg S.L."/>
            <person name="Schwartz J.R."/>
            <person name="Shinn P."/>
            <person name="Southwick A.M."/>
            <person name="Sun H."/>
            <person name="Tallon L.J."/>
            <person name="Tambunga G."/>
            <person name="Toriumi M.J."/>
            <person name="Town C.D."/>
            <person name="Utterback T."/>
            <person name="Van Aken S."/>
            <person name="Vaysberg M."/>
            <person name="Vysotskaia V.S."/>
            <person name="Walker M."/>
            <person name="Wu D."/>
            <person name="Yu G."/>
            <person name="Fraser C.M."/>
            <person name="Venter J.C."/>
            <person name="Davis R.W."/>
        </authorList>
    </citation>
    <scope>NUCLEOTIDE SEQUENCE [LARGE SCALE GENOMIC DNA]</scope>
    <source>
        <strain>cv. Columbia</strain>
    </source>
</reference>
<reference key="2">
    <citation type="journal article" date="2017" name="Plant J.">
        <title>Araport11: a complete reannotation of the Arabidopsis thaliana reference genome.</title>
        <authorList>
            <person name="Cheng C.Y."/>
            <person name="Krishnakumar V."/>
            <person name="Chan A.P."/>
            <person name="Thibaud-Nissen F."/>
            <person name="Schobel S."/>
            <person name="Town C.D."/>
        </authorList>
    </citation>
    <scope>GENOME REANNOTATION</scope>
    <source>
        <strain>cv. Columbia</strain>
    </source>
</reference>
<reference key="3">
    <citation type="journal article" date="2003" name="Science">
        <title>Empirical analysis of transcriptional activity in the Arabidopsis genome.</title>
        <authorList>
            <person name="Yamada K."/>
            <person name="Lim J."/>
            <person name="Dale J.M."/>
            <person name="Chen H."/>
            <person name="Shinn P."/>
            <person name="Palm C.J."/>
            <person name="Southwick A.M."/>
            <person name="Wu H.C."/>
            <person name="Kim C.J."/>
            <person name="Nguyen M."/>
            <person name="Pham P.K."/>
            <person name="Cheuk R.F."/>
            <person name="Karlin-Newmann G."/>
            <person name="Liu S.X."/>
            <person name="Lam B."/>
            <person name="Sakano H."/>
            <person name="Wu T."/>
            <person name="Yu G."/>
            <person name="Miranda M."/>
            <person name="Quach H.L."/>
            <person name="Tripp M."/>
            <person name="Chang C.H."/>
            <person name="Lee J.M."/>
            <person name="Toriumi M.J."/>
            <person name="Chan M.M."/>
            <person name="Tang C.C."/>
            <person name="Onodera C.S."/>
            <person name="Deng J.M."/>
            <person name="Akiyama K."/>
            <person name="Ansari Y."/>
            <person name="Arakawa T."/>
            <person name="Banh J."/>
            <person name="Banno F."/>
            <person name="Bowser L."/>
            <person name="Brooks S.Y."/>
            <person name="Carninci P."/>
            <person name="Chao Q."/>
            <person name="Choy N."/>
            <person name="Enju A."/>
            <person name="Goldsmith A.D."/>
            <person name="Gurjal M."/>
            <person name="Hansen N.F."/>
            <person name="Hayashizaki Y."/>
            <person name="Johnson-Hopson C."/>
            <person name="Hsuan V.W."/>
            <person name="Iida K."/>
            <person name="Karnes M."/>
            <person name="Khan S."/>
            <person name="Koesema E."/>
            <person name="Ishida J."/>
            <person name="Jiang P.X."/>
            <person name="Jones T."/>
            <person name="Kawai J."/>
            <person name="Kamiya A."/>
            <person name="Meyers C."/>
            <person name="Nakajima M."/>
            <person name="Narusaka M."/>
            <person name="Seki M."/>
            <person name="Sakurai T."/>
            <person name="Satou M."/>
            <person name="Tamse R."/>
            <person name="Vaysberg M."/>
            <person name="Wallender E.K."/>
            <person name="Wong C."/>
            <person name="Yamamura Y."/>
            <person name="Yuan S."/>
            <person name="Shinozaki K."/>
            <person name="Davis R.W."/>
            <person name="Theologis A."/>
            <person name="Ecker J.R."/>
        </authorList>
    </citation>
    <scope>NUCLEOTIDE SEQUENCE [LARGE SCALE MRNA]</scope>
    <source>
        <strain>cv. Columbia</strain>
    </source>
</reference>
<proteinExistence type="evidence at transcript level"/>
<keyword id="KW-0472">Membrane</keyword>
<keyword id="KW-1185">Reference proteome</keyword>
<keyword id="KW-0812">Transmembrane</keyword>
<keyword id="KW-1133">Transmembrane helix</keyword>
<name>Y1816_ARATH</name>
<dbReference type="EMBL" id="AC011438">
    <property type="protein sequence ID" value="AAF18257.1"/>
    <property type="status" value="ALT_SEQ"/>
    <property type="molecule type" value="Genomic_DNA"/>
</dbReference>
<dbReference type="EMBL" id="AC026875">
    <property type="protein sequence ID" value="AAF79832.1"/>
    <property type="status" value="ALT_SEQ"/>
    <property type="molecule type" value="Genomic_DNA"/>
</dbReference>
<dbReference type="EMBL" id="CP002684">
    <property type="protein sequence ID" value="AEE28255.1"/>
    <property type="molecule type" value="Genomic_DNA"/>
</dbReference>
<dbReference type="EMBL" id="AY065386">
    <property type="protein sequence ID" value="AAL38827.1"/>
    <property type="molecule type" value="mRNA"/>
</dbReference>
<dbReference type="EMBL" id="AY091277">
    <property type="protein sequence ID" value="AAM14216.1"/>
    <property type="molecule type" value="mRNA"/>
</dbReference>
<dbReference type="PIR" id="A86216">
    <property type="entry name" value="A86216"/>
</dbReference>
<dbReference type="RefSeq" id="NP_849612.1">
    <property type="nucleotide sequence ID" value="NM_179281.2"/>
</dbReference>
<dbReference type="BioGRID" id="22578">
    <property type="interactions" value="1"/>
</dbReference>
<dbReference type="FunCoup" id="Q8VZ13">
    <property type="interactions" value="26"/>
</dbReference>
<dbReference type="PaxDb" id="3702-AT1G08160.1"/>
<dbReference type="ProteomicsDB" id="228722"/>
<dbReference type="EnsemblPlants" id="AT1G08160.1">
    <property type="protein sequence ID" value="AT1G08160.1"/>
    <property type="gene ID" value="AT1G08160"/>
</dbReference>
<dbReference type="GeneID" id="837337"/>
<dbReference type="Gramene" id="AT1G08160.1">
    <property type="protein sequence ID" value="AT1G08160.1"/>
    <property type="gene ID" value="AT1G08160"/>
</dbReference>
<dbReference type="KEGG" id="ath:AT1G08160"/>
<dbReference type="Araport" id="AT1G08160"/>
<dbReference type="TAIR" id="AT1G08160"/>
<dbReference type="eggNOG" id="ENOG502RY5H">
    <property type="taxonomic scope" value="Eukaryota"/>
</dbReference>
<dbReference type="HOGENOM" id="CLU_051752_5_0_1"/>
<dbReference type="InParanoid" id="Q8VZ13"/>
<dbReference type="OMA" id="ISPFKQR"/>
<dbReference type="OrthoDB" id="669838at2759"/>
<dbReference type="PhylomeDB" id="Q8VZ13"/>
<dbReference type="PRO" id="PR:Q8VZ13"/>
<dbReference type="Proteomes" id="UP000006548">
    <property type="component" value="Chromosome 1"/>
</dbReference>
<dbReference type="ExpressionAtlas" id="Q8VZ13">
    <property type="expression patterns" value="baseline and differential"/>
</dbReference>
<dbReference type="GO" id="GO:0016020">
    <property type="term" value="C:membrane"/>
    <property type="evidence" value="ECO:0007669"/>
    <property type="project" value="UniProtKB-SubCell"/>
</dbReference>
<dbReference type="GO" id="GO:0098542">
    <property type="term" value="P:defense response to other organism"/>
    <property type="evidence" value="ECO:0007669"/>
    <property type="project" value="InterPro"/>
</dbReference>
<dbReference type="InterPro" id="IPR004864">
    <property type="entry name" value="LEA_2"/>
</dbReference>
<dbReference type="InterPro" id="IPR044839">
    <property type="entry name" value="NDR1-like"/>
</dbReference>
<dbReference type="PANTHER" id="PTHR31234:SF39">
    <property type="entry name" value="HARPIN-INDUCED PROTEIN 1 CONTAINING PROTEIN, EXPRESSED"/>
    <property type="match status" value="1"/>
</dbReference>
<dbReference type="PANTHER" id="PTHR31234">
    <property type="entry name" value="LATE EMBRYOGENESIS ABUNDANT (LEA) HYDROXYPROLINE-RICH GLYCOPROTEIN FAMILY"/>
    <property type="match status" value="1"/>
</dbReference>
<dbReference type="Pfam" id="PF03168">
    <property type="entry name" value="LEA_2"/>
    <property type="match status" value="1"/>
</dbReference>
<protein>
    <recommendedName>
        <fullName>Uncharacterized protein At1g08160</fullName>
    </recommendedName>
</protein>
<sequence>MVPPNPAHQPARRTQPQLQPQSQPRAQPLPGRRMNPVLCIIVALVLLGLLVGLAILITYLTLRPKRLIYTVEAASVQEFAIGNNDDHINAKFSYVIKSYNPEKHVSVRYHSMRISTAHHNQSVAHKNISPFKQRPKNETRIETQLVSHNVALSKFNARDLRAEKSKGTIEMEVYITARVSYKTWIFRSRRRTLKAVCTPVMINVTSSSLDGFQRVLCKTRL</sequence>
<feature type="chain" id="PRO_0000394998" description="Uncharacterized protein At1g08160">
    <location>
        <begin position="1"/>
        <end position="221"/>
    </location>
</feature>
<feature type="transmembrane region" description="Helical" evidence="1">
    <location>
        <begin position="37"/>
        <end position="57"/>
    </location>
</feature>
<feature type="region of interest" description="Disordered" evidence="2">
    <location>
        <begin position="1"/>
        <end position="30"/>
    </location>
</feature>
<feature type="compositionally biased region" description="Polar residues" evidence="2">
    <location>
        <begin position="12"/>
        <end position="25"/>
    </location>
</feature>
<evidence type="ECO:0000255" key="1"/>
<evidence type="ECO:0000256" key="2">
    <source>
        <dbReference type="SAM" id="MobiDB-lite"/>
    </source>
</evidence>
<evidence type="ECO:0000305" key="3"/>